<keyword id="KW-0614">Plasmid</keyword>
<keyword id="KW-0616">Plasmid partition</keyword>
<organism>
    <name type="scientific">Zygosaccharomyces rouxii</name>
    <dbReference type="NCBI Taxonomy" id="4956"/>
    <lineage>
        <taxon>Eukaryota</taxon>
        <taxon>Fungi</taxon>
        <taxon>Dikarya</taxon>
        <taxon>Ascomycota</taxon>
        <taxon>Saccharomycotina</taxon>
        <taxon>Saccharomycetes</taxon>
        <taxon>Saccharomycetales</taxon>
        <taxon>Saccharomycetaceae</taxon>
        <taxon>Zygosaccharomyces</taxon>
    </lineage>
</organism>
<accession>P13778</accession>
<gene>
    <name type="primary">P</name>
</gene>
<dbReference type="EMBL" id="X02398">
    <property type="protein sequence ID" value="CAA26244.1"/>
    <property type="molecule type" value="Genomic_DNA"/>
</dbReference>
<dbReference type="PIR" id="S28354">
    <property type="entry name" value="S28354"/>
</dbReference>
<dbReference type="GO" id="GO:0030541">
    <property type="term" value="P:plasmid partitioning"/>
    <property type="evidence" value="ECO:0007669"/>
    <property type="project" value="UniProtKB-KW"/>
</dbReference>
<dbReference type="InterPro" id="IPR008897">
    <property type="entry name" value="Rep_fungi"/>
</dbReference>
<dbReference type="Pfam" id="PF05797">
    <property type="entry name" value="Rep_4"/>
    <property type="match status" value="1"/>
</dbReference>
<reference key="1">
    <citation type="journal article" date="1985" name="J. Mol. Biol.">
        <title>Molecular and functional organization of yeast plasmid pSR1.</title>
        <authorList>
            <person name="Araki H."/>
            <person name="Jearnpipatkul A."/>
            <person name="Tatsumi H."/>
            <person name="Sakurai T."/>
            <person name="Ushio T.S.H."/>
            <person name="Muta T."/>
            <person name="Oshima Y."/>
        </authorList>
    </citation>
    <scope>NUCLEOTIDE SEQUENCE [GENOMIC DNA]</scope>
</reference>
<feature type="chain" id="PRO_0000150897" description="Trans-acting factor B">
    <location>
        <begin position="1"/>
        <end position="410"/>
    </location>
</feature>
<feature type="region of interest" description="Disordered" evidence="1">
    <location>
        <begin position="225"/>
        <end position="264"/>
    </location>
</feature>
<feature type="region of interest" description="Disordered" evidence="1">
    <location>
        <begin position="388"/>
        <end position="410"/>
    </location>
</feature>
<feature type="compositionally biased region" description="Acidic residues" evidence="1">
    <location>
        <begin position="225"/>
        <end position="237"/>
    </location>
</feature>
<feature type="compositionally biased region" description="Polar residues" evidence="1">
    <location>
        <begin position="239"/>
        <end position="253"/>
    </location>
</feature>
<feature type="compositionally biased region" description="Basic and acidic residues" evidence="1">
    <location>
        <begin position="388"/>
        <end position="398"/>
    </location>
</feature>
<feature type="compositionally biased region" description="Acidic residues" evidence="1">
    <location>
        <begin position="399"/>
        <end position="410"/>
    </location>
</feature>
<comment type="function">
    <text>Plasmid partition require REP1, REP2, and a cis-acting DNA sequence (known as STB). REP1 may act by intercalating in the yeast nuclear matrix and binding STB either directly or via REP2.</text>
</comment>
<sequence>MFTSQDARDSRPDRELRMMNDVLMTYPYTVIHLPAQNMLSTAKGMVNIAENYRDYPILAIFYVKYLMKKLPYGVIPVNLEWPEPYVVLNTILKRLKEHKFFANKDKEDFAERLHKLIAPDVSIPESRKDEILGQQKKERVVTKTINENFLDPVNARPRLQRFFEKLHNGTLVENLEVGLCKVEILVSSKAMLGQSFKLQIMAANVRELWVGEMVCNMITNETDYGFDEGGGDDDEGSSVEVQNSQSASPGQDQEAQRAPEAPETSSQLFDKIVSALQDDPDSAKAQLGQCRKLASYLLSHKREQEDFFMQTKDTRARLYLDLKGCLGSSWKFSIYRGVRCKQNGQLKVSLKPSNSGHLSGFWVNIKMTSQGNTLDDIRLQVRCDILGKDTNRRGGSEKDPEDQSETESSG</sequence>
<evidence type="ECO:0000256" key="1">
    <source>
        <dbReference type="SAM" id="MobiDB-lite"/>
    </source>
</evidence>
<geneLocation type="plasmid">
    <name>pSR1</name>
</geneLocation>
<name>REP1_ZYGRO</name>
<proteinExistence type="predicted"/>
<protein>
    <recommendedName>
        <fullName>Trans-acting factor B</fullName>
    </recommendedName>
    <alternativeName>
        <fullName>REP1</fullName>
    </alternativeName>
</protein>